<sequence>MEALSERFSALQDKLMDLYESGLEDLETQIQHWKLLRQEQILLYYARKRGIMRLGYQPVPPLATSEIKAKDAIAIGILLESLQKSKYADEPWTLVETSLETIRSPPVDCFKKGPKTVEVYFDGDPENVMPYTVWSYIYYQTDEDTWEKVEGHVDYTGAYFYEGQLKNYYIKFEADAKRFGTTGMWEVHVNKDTVFTPVTSSTPPVGDASNNAVPEASTTSLSSPQRSPSTNRRYGRKASSPTATTRRQKRQGKETLTRRRKTRSRSRSREQRGGRETQRSSSRGASKSPRRGGRSGGGPLTRSRSRSRSPESVTGGGVAPSEVGASLRSVSRHSSGRLAQLLDAAKDPPVILLRGGANTLKCYRYRFRKKHAGKFYYVSTTWSWIGGHSTDRVGRARMLIAFHSNHEREKCIQEMKLPLGVDWSYGQFDDL</sequence>
<comment type="function">
    <text evidence="1">Plays a role in the initiation of viral DNA replication. A dimer of E2 interacts with a dimer of E1 in order to improve specificity of E1 DNA binding activity. Once the complex recognizes and binds DNA at specific sites, the E2 dimer is removed from DNA. E2 also regulates viral transcription through binding to the E2RE response element (5'-ACCNNNNNNGGT-3') present in multiple copies in the regulatory regions of the viral genome. Activates or represses transcription depending on E2RE's position with regards to proximal promoter elements including the TATA-box. Repression occurs by sterically hindering the assembly of the transcription initiation complex.</text>
</comment>
<comment type="subunit">
    <text evidence="1">Binds DNA as homodimer. Interacts with protein E1; this interaction greatly increases E1 DNA-binding activity. Interacts with protein L1; this interaction enhances E2-dependent replication and transcription activation. Interacts with protein L2; this interaction inhibits E2 transcriptional activity but not DNA replication function E2. Interacts with protein E7; this interaction inhibits E7 oncogenic activity. Interacts with host TAF1; this interaction modulates E2-dependent transcriptional regulation. Interacts with host BRD4; this interaction mediates E2 transcriptional activation function. Additionally, the interaction with host BRD4 on mitotic chromosomes mediates tethering of the viral genome. Interacts with host TOPBP1; this interaction is required for optimal viral DNA replication.</text>
</comment>
<comment type="subcellular location">
    <subcellularLocation>
        <location evidence="1">Host nucleus</location>
    </subcellularLocation>
</comment>
<comment type="PTM">
    <text evidence="1">Phosphorylated.</text>
</comment>
<comment type="similarity">
    <text evidence="1">Belongs to the papillomaviridae E2 protein family.</text>
</comment>
<evidence type="ECO:0000255" key="1">
    <source>
        <dbReference type="HAMAP-Rule" id="MF_04001"/>
    </source>
</evidence>
<evidence type="ECO:0000256" key="2">
    <source>
        <dbReference type="SAM" id="MobiDB-lite"/>
    </source>
</evidence>
<keyword id="KW-0010">Activator</keyword>
<keyword id="KW-0235">DNA replication</keyword>
<keyword id="KW-0238">DNA-binding</keyword>
<keyword id="KW-0244">Early protein</keyword>
<keyword id="KW-1048">Host nucleus</keyword>
<keyword id="KW-0597">Phosphoprotein</keyword>
<keyword id="KW-1185">Reference proteome</keyword>
<keyword id="KW-0678">Repressor</keyword>
<keyword id="KW-0804">Transcription</keyword>
<keyword id="KW-0805">Transcription regulation</keyword>
<organismHost>
    <name type="scientific">Homo sapiens</name>
    <name type="common">Human</name>
    <dbReference type="NCBI Taxonomy" id="9606"/>
</organismHost>
<organism>
    <name type="scientific">Human papillomavirus 23</name>
    <dbReference type="NCBI Taxonomy" id="37955"/>
    <lineage>
        <taxon>Viruses</taxon>
        <taxon>Monodnaviria</taxon>
        <taxon>Shotokuvirae</taxon>
        <taxon>Cossaviricota</taxon>
        <taxon>Papovaviricetes</taxon>
        <taxon>Zurhausenvirales</taxon>
        <taxon>Papillomaviridae</taxon>
        <taxon>Firstpapillomavirinae</taxon>
        <taxon>Betapapillomavirus</taxon>
        <taxon>Betapapillomavirus 2</taxon>
    </lineage>
</organism>
<accession>P50769</accession>
<dbReference type="EMBL" id="U31781">
    <property type="protein sequence ID" value="AAA79411.1"/>
    <property type="molecule type" value="Genomic_DNA"/>
</dbReference>
<dbReference type="SMR" id="P50769"/>
<dbReference type="Proteomes" id="UP000009112">
    <property type="component" value="Segment"/>
</dbReference>
<dbReference type="GO" id="GO:0042025">
    <property type="term" value="C:host cell nucleus"/>
    <property type="evidence" value="ECO:0007669"/>
    <property type="project" value="UniProtKB-SubCell"/>
</dbReference>
<dbReference type="GO" id="GO:0003677">
    <property type="term" value="F:DNA binding"/>
    <property type="evidence" value="ECO:0007669"/>
    <property type="project" value="UniProtKB-UniRule"/>
</dbReference>
<dbReference type="GO" id="GO:0003700">
    <property type="term" value="F:DNA-binding transcription factor activity"/>
    <property type="evidence" value="ECO:0007669"/>
    <property type="project" value="UniProtKB-UniRule"/>
</dbReference>
<dbReference type="GO" id="GO:0000166">
    <property type="term" value="F:nucleotide binding"/>
    <property type="evidence" value="ECO:0007669"/>
    <property type="project" value="UniProtKB-UniRule"/>
</dbReference>
<dbReference type="GO" id="GO:0006260">
    <property type="term" value="P:DNA replication"/>
    <property type="evidence" value="ECO:0007669"/>
    <property type="project" value="UniProtKB-KW"/>
</dbReference>
<dbReference type="GO" id="GO:0006351">
    <property type="term" value="P:DNA-templated transcription"/>
    <property type="evidence" value="ECO:0007669"/>
    <property type="project" value="UniProtKB-UniRule"/>
</dbReference>
<dbReference type="GO" id="GO:0006275">
    <property type="term" value="P:regulation of DNA replication"/>
    <property type="evidence" value="ECO:0007669"/>
    <property type="project" value="UniProtKB-UniRule"/>
</dbReference>
<dbReference type="GO" id="GO:0039693">
    <property type="term" value="P:viral DNA genome replication"/>
    <property type="evidence" value="ECO:0007669"/>
    <property type="project" value="UniProtKB-UniRule"/>
</dbReference>
<dbReference type="Gene3D" id="3.30.70.330">
    <property type="match status" value="1"/>
</dbReference>
<dbReference type="Gene3D" id="1.10.287.30">
    <property type="entry name" value="E2 (early) protein, N terminal domain, subdomain 1"/>
    <property type="match status" value="1"/>
</dbReference>
<dbReference type="Gene3D" id="2.170.200.10">
    <property type="entry name" value="Papillomavirus E2 early protein domain"/>
    <property type="match status" value="1"/>
</dbReference>
<dbReference type="HAMAP" id="MF_04001">
    <property type="entry name" value="PPV_E2"/>
    <property type="match status" value="1"/>
</dbReference>
<dbReference type="InterPro" id="IPR035975">
    <property type="entry name" value="E2/EBNA1_C_sf"/>
</dbReference>
<dbReference type="InterPro" id="IPR012677">
    <property type="entry name" value="Nucleotide-bd_a/b_plait_sf"/>
</dbReference>
<dbReference type="InterPro" id="IPR000427">
    <property type="entry name" value="Papillomavirus_E2_C"/>
</dbReference>
<dbReference type="InterPro" id="IPR001866">
    <property type="entry name" value="PPV_E2_N"/>
</dbReference>
<dbReference type="InterPro" id="IPR033668">
    <property type="entry name" value="Reg_prot_E2"/>
</dbReference>
<dbReference type="InterPro" id="IPR036050">
    <property type="entry name" value="Regulatory_protein_E2_N"/>
</dbReference>
<dbReference type="InterPro" id="IPR042503">
    <property type="entry name" value="Regulatory_protein_E2_N_1"/>
</dbReference>
<dbReference type="InterPro" id="IPR042504">
    <property type="entry name" value="Regulatory_protein_E2_N_2"/>
</dbReference>
<dbReference type="Pfam" id="PF00511">
    <property type="entry name" value="PPV_E2_C"/>
    <property type="match status" value="1"/>
</dbReference>
<dbReference type="Pfam" id="PF00508">
    <property type="entry name" value="PPV_E2_N"/>
    <property type="match status" value="1"/>
</dbReference>
<dbReference type="SUPFAM" id="SSF51332">
    <property type="entry name" value="E2 regulatory, transactivation domain"/>
    <property type="match status" value="1"/>
</dbReference>
<dbReference type="SUPFAM" id="SSF54957">
    <property type="entry name" value="Viral DNA-binding domain"/>
    <property type="match status" value="1"/>
</dbReference>
<feature type="chain" id="PRO_0000133202" description="Regulatory protein E2">
    <location>
        <begin position="1"/>
        <end position="431"/>
    </location>
</feature>
<feature type="region of interest" description="Transactivation domain" evidence="1">
    <location>
        <begin position="1"/>
        <end position="201"/>
    </location>
</feature>
<feature type="region of interest" description="Disordered" evidence="2">
    <location>
        <begin position="195"/>
        <end position="330"/>
    </location>
</feature>
<feature type="region of interest" description="DNA-binding domain" evidence="1">
    <location>
        <begin position="347"/>
        <end position="431"/>
    </location>
</feature>
<feature type="compositionally biased region" description="Low complexity" evidence="2">
    <location>
        <begin position="195"/>
        <end position="205"/>
    </location>
</feature>
<feature type="compositionally biased region" description="Polar residues" evidence="2">
    <location>
        <begin position="208"/>
        <end position="232"/>
    </location>
</feature>
<feature type="compositionally biased region" description="Basic and acidic residues" evidence="2">
    <location>
        <begin position="267"/>
        <end position="278"/>
    </location>
</feature>
<name>VE2_HPV23</name>
<reference key="1">
    <citation type="submission" date="1995-10" db="EMBL/GenBank/DDBJ databases">
        <authorList>
            <person name="Delius H."/>
        </authorList>
    </citation>
    <scope>NUCLEOTIDE SEQUENCE [GENOMIC DNA]</scope>
</reference>
<protein>
    <recommendedName>
        <fullName evidence="1">Regulatory protein E2</fullName>
    </recommendedName>
</protein>
<gene>
    <name evidence="1" type="primary">E2</name>
</gene>
<proteinExistence type="inferred from homology"/>